<protein>
    <recommendedName>
        <fullName evidence="7">Protein DNA-DAMAGE INDUCIBLE 1</fullName>
        <ecNumber evidence="4">3.4.23.-</ecNumber>
    </recommendedName>
</protein>
<gene>
    <name evidence="7" type="primary">DDI1</name>
    <name evidence="9" type="ordered locus">At3g13235</name>
    <name evidence="10" type="ORF">MDC11.6</name>
</gene>
<sequence length="414" mass="45359">MRITVMTAGEQIITLDVDSQETVENVKALLEVESNVPIQQQQLLYNGNEMGNSDKLSALGVKDDDLLMMMVSNASSGSATSAAGNDLGMNPDGSALNPAAFQQHIRGDSNLMGQLFQNDPELAQVISGSDLNKLQDVLRARHRQRSVLQRQKEEELALLYADPFDVEAQRKIEAAIRQKGIDENWEAALEHNPEGFARVIMLYVDMEVNGVPLKAFVDSGAQSTIISKSCAERCGLLRLMDQRYKGIAHGVGQTEILGRIHVAPIKIGNNFYPCSFVVLDSPNMEFLFGLDMLRKHQCTIDLKENVMTVGGGEVSVPFLQEKDIPSRFLDEERVPNDASSSGATVPSGFTEKKNNTVANPTSQQPKRQNTSEGPEFEAKIAKLVELGFSRDSVIQALKLFEGNEEQAAGFLFGG</sequence>
<dbReference type="EC" id="3.4.23.-" evidence="4"/>
<dbReference type="EMBL" id="AB024034">
    <property type="protein sequence ID" value="BAB02792.1"/>
    <property type="status" value="ALT_SEQ"/>
    <property type="molecule type" value="Genomic_DNA"/>
</dbReference>
<dbReference type="EMBL" id="CP002686">
    <property type="protein sequence ID" value="AEE75323.1"/>
    <property type="molecule type" value="Genomic_DNA"/>
</dbReference>
<dbReference type="EMBL" id="CP002686">
    <property type="protein sequence ID" value="AEE75325.1"/>
    <property type="molecule type" value="Genomic_DNA"/>
</dbReference>
<dbReference type="EMBL" id="BT025980">
    <property type="protein sequence ID" value="ABG25069.1"/>
    <property type="molecule type" value="mRNA"/>
</dbReference>
<dbReference type="EMBL" id="AK226800">
    <property type="protein sequence ID" value="BAE98897.1"/>
    <property type="molecule type" value="mRNA"/>
</dbReference>
<dbReference type="EMBL" id="AY085083">
    <property type="protein sequence ID" value="AAM61638.1"/>
    <property type="molecule type" value="mRNA"/>
</dbReference>
<dbReference type="RefSeq" id="NP_001189877.1">
    <property type="nucleotide sequence ID" value="NM_001202948.2"/>
</dbReference>
<dbReference type="RefSeq" id="NP_566451.1">
    <property type="nucleotide sequence ID" value="NM_112168.5"/>
</dbReference>
<dbReference type="SMR" id="Q1EBV4"/>
<dbReference type="FunCoup" id="Q1EBV4">
    <property type="interactions" value="3370"/>
</dbReference>
<dbReference type="STRING" id="3702.Q1EBV4"/>
<dbReference type="MEROPS" id="A28.A03"/>
<dbReference type="iPTMnet" id="Q1EBV4"/>
<dbReference type="PaxDb" id="3702-AT3G13235.1"/>
<dbReference type="ProteomicsDB" id="224692"/>
<dbReference type="EnsemblPlants" id="AT3G13235.1">
    <property type="protein sequence ID" value="AT3G13235.1"/>
    <property type="gene ID" value="AT3G13235"/>
</dbReference>
<dbReference type="EnsemblPlants" id="AT3G13235.2">
    <property type="protein sequence ID" value="AT3G13235.2"/>
    <property type="gene ID" value="AT3G13235"/>
</dbReference>
<dbReference type="GeneID" id="820522"/>
<dbReference type="Gramene" id="AT3G13235.1">
    <property type="protein sequence ID" value="AT3G13235.1"/>
    <property type="gene ID" value="AT3G13235"/>
</dbReference>
<dbReference type="Gramene" id="AT3G13235.2">
    <property type="protein sequence ID" value="AT3G13235.2"/>
    <property type="gene ID" value="AT3G13235"/>
</dbReference>
<dbReference type="KEGG" id="ath:AT3G13235"/>
<dbReference type="Araport" id="AT3G13235"/>
<dbReference type="TAIR" id="AT3G13235">
    <property type="gene designation" value="DDI1"/>
</dbReference>
<dbReference type="eggNOG" id="KOG0012">
    <property type="taxonomic scope" value="Eukaryota"/>
</dbReference>
<dbReference type="InParanoid" id="Q1EBV4"/>
<dbReference type="OMA" id="GHRLNAF"/>
<dbReference type="OrthoDB" id="1047367at2759"/>
<dbReference type="PhylomeDB" id="Q1EBV4"/>
<dbReference type="PRO" id="PR:Q1EBV4"/>
<dbReference type="Proteomes" id="UP000006548">
    <property type="component" value="Chromosome 3"/>
</dbReference>
<dbReference type="ExpressionAtlas" id="Q1EBV4">
    <property type="expression patterns" value="baseline and differential"/>
</dbReference>
<dbReference type="GO" id="GO:0005829">
    <property type="term" value="C:cytosol"/>
    <property type="evidence" value="ECO:0007005"/>
    <property type="project" value="TAIR"/>
</dbReference>
<dbReference type="GO" id="GO:0004190">
    <property type="term" value="F:aspartic-type endopeptidase activity"/>
    <property type="evidence" value="ECO:0007669"/>
    <property type="project" value="UniProtKB-KW"/>
</dbReference>
<dbReference type="GO" id="GO:0031593">
    <property type="term" value="F:polyubiquitin modification-dependent protein binding"/>
    <property type="evidence" value="ECO:0000314"/>
    <property type="project" value="UniProtKB"/>
</dbReference>
<dbReference type="GO" id="GO:0006508">
    <property type="term" value="P:proteolysis"/>
    <property type="evidence" value="ECO:0007669"/>
    <property type="project" value="UniProtKB-KW"/>
</dbReference>
<dbReference type="CDD" id="cd05479">
    <property type="entry name" value="RP_DDI"/>
    <property type="match status" value="1"/>
</dbReference>
<dbReference type="CDD" id="cd14309">
    <property type="entry name" value="UBA_scDdi1_like"/>
    <property type="match status" value="1"/>
</dbReference>
<dbReference type="CDD" id="cd01796">
    <property type="entry name" value="Ubl_Ddi1_like"/>
    <property type="match status" value="1"/>
</dbReference>
<dbReference type="FunFam" id="2.40.70.10:FF:000005">
    <property type="entry name" value="DNA damage inducible 1 homolog 2"/>
    <property type="match status" value="1"/>
</dbReference>
<dbReference type="FunFam" id="3.10.20.90:FF:000517">
    <property type="entry name" value="Protein DNA-DAMAGE INDUCIBLE 1"/>
    <property type="match status" value="1"/>
</dbReference>
<dbReference type="Gene3D" id="2.40.70.10">
    <property type="entry name" value="Acid Proteases"/>
    <property type="match status" value="1"/>
</dbReference>
<dbReference type="Gene3D" id="1.10.8.10">
    <property type="entry name" value="DNA helicase RuvA subunit, C-terminal domain"/>
    <property type="match status" value="1"/>
</dbReference>
<dbReference type="Gene3D" id="3.10.20.90">
    <property type="entry name" value="Phosphatidylinositol 3-kinase Catalytic Subunit, Chain A, domain 1"/>
    <property type="match status" value="1"/>
</dbReference>
<dbReference type="InterPro" id="IPR033882">
    <property type="entry name" value="DDI1_N"/>
</dbReference>
<dbReference type="InterPro" id="IPR001995">
    <property type="entry name" value="Peptidase_A2_cat"/>
</dbReference>
<dbReference type="InterPro" id="IPR019103">
    <property type="entry name" value="Peptidase_aspartic_DDI1-type"/>
</dbReference>
<dbReference type="InterPro" id="IPR021109">
    <property type="entry name" value="Peptidase_aspartic_dom_sf"/>
</dbReference>
<dbReference type="InterPro" id="IPR015940">
    <property type="entry name" value="UBA"/>
</dbReference>
<dbReference type="InterPro" id="IPR009060">
    <property type="entry name" value="UBA-like_sf"/>
</dbReference>
<dbReference type="InterPro" id="IPR000626">
    <property type="entry name" value="Ubiquitin-like_dom"/>
</dbReference>
<dbReference type="InterPro" id="IPR029071">
    <property type="entry name" value="Ubiquitin-like_domsf"/>
</dbReference>
<dbReference type="InterPro" id="IPR019956">
    <property type="entry name" value="Ubiquitin_dom"/>
</dbReference>
<dbReference type="PANTHER" id="PTHR12917">
    <property type="entry name" value="ASPARTYL PROTEASE DDI-RELATED"/>
    <property type="match status" value="1"/>
</dbReference>
<dbReference type="PANTHER" id="PTHR12917:SF1">
    <property type="entry name" value="AT13091P"/>
    <property type="match status" value="1"/>
</dbReference>
<dbReference type="Pfam" id="PF09668">
    <property type="entry name" value="Asp_protease"/>
    <property type="match status" value="1"/>
</dbReference>
<dbReference type="Pfam" id="PF00627">
    <property type="entry name" value="UBA"/>
    <property type="match status" value="1"/>
</dbReference>
<dbReference type="Pfam" id="PF00240">
    <property type="entry name" value="ubiquitin"/>
    <property type="match status" value="1"/>
</dbReference>
<dbReference type="PRINTS" id="PR00348">
    <property type="entry name" value="UBIQUITIN"/>
</dbReference>
<dbReference type="SMART" id="SM00165">
    <property type="entry name" value="UBA"/>
    <property type="match status" value="1"/>
</dbReference>
<dbReference type="SMART" id="SM00213">
    <property type="entry name" value="UBQ"/>
    <property type="match status" value="1"/>
</dbReference>
<dbReference type="SUPFAM" id="SSF50630">
    <property type="entry name" value="Acid proteases"/>
    <property type="match status" value="1"/>
</dbReference>
<dbReference type="SUPFAM" id="SSF46934">
    <property type="entry name" value="UBA-like"/>
    <property type="match status" value="1"/>
</dbReference>
<dbReference type="SUPFAM" id="SSF54236">
    <property type="entry name" value="Ubiquitin-like"/>
    <property type="match status" value="1"/>
</dbReference>
<dbReference type="PROSITE" id="PS50175">
    <property type="entry name" value="ASP_PROT_RETROV"/>
    <property type="match status" value="1"/>
</dbReference>
<dbReference type="PROSITE" id="PS50030">
    <property type="entry name" value="UBA"/>
    <property type="match status" value="1"/>
</dbReference>
<dbReference type="PROSITE" id="PS50053">
    <property type="entry name" value="UBIQUITIN_2"/>
    <property type="match status" value="1"/>
</dbReference>
<evidence type="ECO:0000250" key="1">
    <source>
        <dbReference type="UniProtKB" id="Q5TDH0"/>
    </source>
</evidence>
<evidence type="ECO:0000255" key="2">
    <source>
        <dbReference type="PROSITE-ProRule" id="PRU00212"/>
    </source>
</evidence>
<evidence type="ECO:0000255" key="3">
    <source>
        <dbReference type="PROSITE-ProRule" id="PRU00214"/>
    </source>
</evidence>
<evidence type="ECO:0000255" key="4">
    <source>
        <dbReference type="PROSITE-ProRule" id="PRU00275"/>
    </source>
</evidence>
<evidence type="ECO:0000256" key="5">
    <source>
        <dbReference type="SAM" id="MobiDB-lite"/>
    </source>
</evidence>
<evidence type="ECO:0000269" key="6">
    <source>
    </source>
</evidence>
<evidence type="ECO:0000303" key="7">
    <source>
    </source>
</evidence>
<evidence type="ECO:0000305" key="8"/>
<evidence type="ECO:0000312" key="9">
    <source>
        <dbReference type="Araport" id="AT3G13235"/>
    </source>
</evidence>
<evidence type="ECO:0000312" key="10">
    <source>
        <dbReference type="EMBL" id="BAB02792.1"/>
    </source>
</evidence>
<accession>Q1EBV4</accession>
<accession>A0A178VJ92</accession>
<accession>Q8LF25</accession>
<accession>Q9LTU5</accession>
<proteinExistence type="evidence at protein level"/>
<name>DDI1_ARATH</name>
<comment type="function">
    <text evidence="6">Receptor of ubiquitinated protein targeted to ubiquitin/proteasome-mediated proteolysis (UPP). Relatively weak affinity for both 'Lys-48'- and 'Lys-63'-linked ubiquitin chains with a slight preference for 'Lys-48-'linked chains of three or more ubiquitin units.</text>
</comment>
<comment type="subunit">
    <text evidence="1">Homodimer.</text>
</comment>
<comment type="subcellular location">
    <subcellularLocation>
        <location evidence="1">Cytoplasm</location>
        <location evidence="1">Cytosol</location>
    </subcellularLocation>
</comment>
<comment type="similarity">
    <text evidence="8">Belongs to the DDI1 family.</text>
</comment>
<comment type="sequence caution" evidence="8">
    <conflict type="erroneous gene model prediction">
        <sequence resource="EMBL-CDS" id="BAB02792"/>
    </conflict>
</comment>
<feature type="chain" id="PRO_0000445396" description="Protein DNA-DAMAGE INDUCIBLE 1">
    <location>
        <begin position="1"/>
        <end position="414"/>
    </location>
</feature>
<feature type="domain" description="Ubiquitin-like" evidence="3">
    <location>
        <begin position="1"/>
        <end position="76"/>
    </location>
</feature>
<feature type="domain" description="Peptidase A2" evidence="4">
    <location>
        <begin position="213"/>
        <end position="292"/>
    </location>
</feature>
<feature type="domain" description="UBA" evidence="2">
    <location>
        <begin position="374"/>
        <end position="414"/>
    </location>
</feature>
<feature type="region of interest" description="Disordered" evidence="5">
    <location>
        <begin position="332"/>
        <end position="374"/>
    </location>
</feature>
<feature type="compositionally biased region" description="Polar residues" evidence="5">
    <location>
        <begin position="355"/>
        <end position="372"/>
    </location>
</feature>
<feature type="active site" evidence="4">
    <location>
        <position position="218"/>
    </location>
</feature>
<feature type="mutagenesis site" description="Impaired binding to Lys-48- and Lys-63-linked ubiquitin chains." evidence="6">
    <original>LG</original>
    <variation>AA</variation>
    <location>
        <begin position="386"/>
        <end position="387"/>
    </location>
</feature>
<feature type="sequence conflict" description="In Ref. 5; AAM61638." evidence="8" ref="5">
    <original>MEVNG</original>
    <variation>IEVNS</variation>
    <location>
        <begin position="206"/>
        <end position="210"/>
    </location>
</feature>
<feature type="sequence conflict" description="In Ref. 5; AAM61638." evidence="8" ref="5">
    <original>T</original>
    <variation>M</variation>
    <location>
        <position position="344"/>
    </location>
</feature>
<organism>
    <name type="scientific">Arabidopsis thaliana</name>
    <name type="common">Mouse-ear cress</name>
    <dbReference type="NCBI Taxonomy" id="3702"/>
    <lineage>
        <taxon>Eukaryota</taxon>
        <taxon>Viridiplantae</taxon>
        <taxon>Streptophyta</taxon>
        <taxon>Embryophyta</taxon>
        <taxon>Tracheophyta</taxon>
        <taxon>Spermatophyta</taxon>
        <taxon>Magnoliopsida</taxon>
        <taxon>eudicotyledons</taxon>
        <taxon>Gunneridae</taxon>
        <taxon>Pentapetalae</taxon>
        <taxon>rosids</taxon>
        <taxon>malvids</taxon>
        <taxon>Brassicales</taxon>
        <taxon>Brassicaceae</taxon>
        <taxon>Camelineae</taxon>
        <taxon>Arabidopsis</taxon>
    </lineage>
</organism>
<keyword id="KW-0064">Aspartyl protease</keyword>
<keyword id="KW-0963">Cytoplasm</keyword>
<keyword id="KW-0378">Hydrolase</keyword>
<keyword id="KW-0645">Protease</keyword>
<keyword id="KW-1185">Reference proteome</keyword>
<keyword id="KW-0833">Ubl conjugation pathway</keyword>
<reference key="1">
    <citation type="journal article" date="2000" name="DNA Res.">
        <title>Structural analysis of Arabidopsis thaliana chromosome 3. I. Sequence features of the regions of 4,504,864 bp covered by sixty P1 and TAC clones.</title>
        <authorList>
            <person name="Sato S."/>
            <person name="Nakamura Y."/>
            <person name="Kaneko T."/>
            <person name="Katoh T."/>
            <person name="Asamizu E."/>
            <person name="Tabata S."/>
        </authorList>
    </citation>
    <scope>NUCLEOTIDE SEQUENCE [LARGE SCALE GENOMIC DNA]</scope>
    <source>
        <strain>cv. Columbia</strain>
    </source>
</reference>
<reference key="2">
    <citation type="journal article" date="2017" name="Plant J.">
        <title>Araport11: a complete reannotation of the Arabidopsis thaliana reference genome.</title>
        <authorList>
            <person name="Cheng C.Y."/>
            <person name="Krishnakumar V."/>
            <person name="Chan A.P."/>
            <person name="Thibaud-Nissen F."/>
            <person name="Schobel S."/>
            <person name="Town C.D."/>
        </authorList>
    </citation>
    <scope>GENOME REANNOTATION</scope>
    <source>
        <strain>cv. Columbia</strain>
    </source>
</reference>
<reference key="3">
    <citation type="submission" date="2006-06" db="EMBL/GenBank/DDBJ databases">
        <title>Arabidopsis ORF clones.</title>
        <authorList>
            <person name="Shinn P."/>
            <person name="Chen H."/>
            <person name="Kim C.J."/>
            <person name="Quinitio C."/>
            <person name="Ecker J.R."/>
        </authorList>
    </citation>
    <scope>NUCLEOTIDE SEQUENCE [LARGE SCALE MRNA]</scope>
    <source>
        <strain>cv. Columbia</strain>
    </source>
</reference>
<reference key="4">
    <citation type="submission" date="2006-07" db="EMBL/GenBank/DDBJ databases">
        <title>Large-scale analysis of RIKEN Arabidopsis full-length (RAFL) cDNAs.</title>
        <authorList>
            <person name="Totoki Y."/>
            <person name="Seki M."/>
            <person name="Ishida J."/>
            <person name="Nakajima M."/>
            <person name="Enju A."/>
            <person name="Kamiya A."/>
            <person name="Narusaka M."/>
            <person name="Shin-i T."/>
            <person name="Nakagawa M."/>
            <person name="Sakamoto N."/>
            <person name="Oishi K."/>
            <person name="Kohara Y."/>
            <person name="Kobayashi M."/>
            <person name="Toyoda A."/>
            <person name="Sakaki Y."/>
            <person name="Sakurai T."/>
            <person name="Iida K."/>
            <person name="Akiyama K."/>
            <person name="Satou M."/>
            <person name="Toyoda T."/>
            <person name="Konagaya A."/>
            <person name="Carninci P."/>
            <person name="Kawai J."/>
            <person name="Hayashizaki Y."/>
            <person name="Shinozaki K."/>
        </authorList>
    </citation>
    <scope>NUCLEOTIDE SEQUENCE [LARGE SCALE MRNA]</scope>
    <source>
        <strain>cv. Columbia</strain>
    </source>
</reference>
<reference key="5">
    <citation type="submission" date="2002-03" db="EMBL/GenBank/DDBJ databases">
        <title>Full-length cDNA from Arabidopsis thaliana.</title>
        <authorList>
            <person name="Brover V.V."/>
            <person name="Troukhan M.E."/>
            <person name="Alexandrov N.A."/>
            <person name="Lu Y.-P."/>
            <person name="Flavell R.B."/>
            <person name="Feldmann K.A."/>
        </authorList>
    </citation>
    <scope>NUCLEOTIDE SEQUENCE [LARGE SCALE MRNA]</scope>
</reference>
<reference key="6">
    <citation type="journal article" date="2008" name="J. Proteome Res.">
        <title>Site-specific phosphorylation profiling of Arabidopsis proteins by mass spectrometry and peptide chip analysis.</title>
        <authorList>
            <person name="de la Fuente van Bentem S."/>
            <person name="Anrather D."/>
            <person name="Dohnal I."/>
            <person name="Roitinger E."/>
            <person name="Csaszar E."/>
            <person name="Joore J."/>
            <person name="Buijnink J."/>
            <person name="Carreri A."/>
            <person name="Forzani C."/>
            <person name="Lorkovic Z.J."/>
            <person name="Barta A."/>
            <person name="Lecourieux D."/>
            <person name="Verhounig A."/>
            <person name="Jonak C."/>
            <person name="Hirt H."/>
        </authorList>
    </citation>
    <scope>IDENTIFICATION BY MASS SPECTROMETRY [LARGE SCALE ANALYSIS]</scope>
</reference>
<reference key="7">
    <citation type="journal article" date="2011" name="Plant Cell">
        <title>The defective proteasome but not substrate recognition function is responsible for the null phenotypes of the Arabidopsis proteasome subunit RPN10.</title>
        <authorList>
            <person name="Lin Y.-L."/>
            <person name="Sung S.-C."/>
            <person name="Tsai H.-L."/>
            <person name="Yu T.-T."/>
            <person name="Radjacommare R."/>
            <person name="Usharani R."/>
            <person name="Fatimababy A.S."/>
            <person name="Lin H.-Y."/>
            <person name="Wang Y.-Y."/>
            <person name="Fu H."/>
        </authorList>
    </citation>
    <scope>FUNCTION</scope>
    <scope>MUTAGENESIS OF 386-LEU-GLY-387</scope>
</reference>